<name>NUOCD_SULSY</name>
<reference key="1">
    <citation type="journal article" date="2009" name="J. Bacteriol.">
        <title>Complete and draft genome sequences of six members of the Aquificales.</title>
        <authorList>
            <person name="Reysenbach A.-L."/>
            <person name="Hamamura N."/>
            <person name="Podar M."/>
            <person name="Griffiths E."/>
            <person name="Ferreira S."/>
            <person name="Hochstein R."/>
            <person name="Heidelberg J."/>
            <person name="Johnson J."/>
            <person name="Mead D."/>
            <person name="Pohorille A."/>
            <person name="Sarmiento M."/>
            <person name="Schweighofer K."/>
            <person name="Seshadri R."/>
            <person name="Voytek M.A."/>
        </authorList>
    </citation>
    <scope>NUCLEOTIDE SEQUENCE [LARGE SCALE GENOMIC DNA]</scope>
    <source>
        <strain>YO3AOP1</strain>
    </source>
</reference>
<gene>
    <name evidence="2" type="primary">nuoC</name>
    <name type="synonym">nuoCD</name>
    <name type="synonym">nuoD</name>
    <name type="ordered locus">SYO3AOP1_0628</name>
</gene>
<accession>B2V8J2</accession>
<organism>
    <name type="scientific">Sulfurihydrogenibium sp. (strain YO3AOP1)</name>
    <dbReference type="NCBI Taxonomy" id="436114"/>
    <lineage>
        <taxon>Bacteria</taxon>
        <taxon>Pseudomonadati</taxon>
        <taxon>Aquificota</taxon>
        <taxon>Aquificia</taxon>
        <taxon>Aquificales</taxon>
        <taxon>Hydrogenothermaceae</taxon>
        <taxon>Sulfurihydrogenibium</taxon>
    </lineage>
</organism>
<proteinExistence type="inferred from homology"/>
<dbReference type="EC" id="7.1.1.-" evidence="2"/>
<dbReference type="EMBL" id="CP001080">
    <property type="protein sequence ID" value="ACD66265.1"/>
    <property type="molecule type" value="Genomic_DNA"/>
</dbReference>
<dbReference type="RefSeq" id="WP_012459344.1">
    <property type="nucleotide sequence ID" value="NC_010730.1"/>
</dbReference>
<dbReference type="SMR" id="B2V8J2"/>
<dbReference type="STRING" id="436114.SYO3AOP1_0628"/>
<dbReference type="KEGG" id="sul:SYO3AOP1_0628"/>
<dbReference type="eggNOG" id="COG0649">
    <property type="taxonomic scope" value="Bacteria"/>
</dbReference>
<dbReference type="eggNOG" id="COG0852">
    <property type="taxonomic scope" value="Bacteria"/>
</dbReference>
<dbReference type="HOGENOM" id="CLU_015134_3_2_0"/>
<dbReference type="GO" id="GO:0030964">
    <property type="term" value="C:NADH dehydrogenase complex"/>
    <property type="evidence" value="ECO:0007669"/>
    <property type="project" value="InterPro"/>
</dbReference>
<dbReference type="GO" id="GO:0005886">
    <property type="term" value="C:plasma membrane"/>
    <property type="evidence" value="ECO:0007669"/>
    <property type="project" value="UniProtKB-SubCell"/>
</dbReference>
<dbReference type="GO" id="GO:0051287">
    <property type="term" value="F:NAD binding"/>
    <property type="evidence" value="ECO:0007669"/>
    <property type="project" value="InterPro"/>
</dbReference>
<dbReference type="GO" id="GO:0008137">
    <property type="term" value="F:NADH dehydrogenase (ubiquinone) activity"/>
    <property type="evidence" value="ECO:0007669"/>
    <property type="project" value="InterPro"/>
</dbReference>
<dbReference type="GO" id="GO:0050136">
    <property type="term" value="F:NADH:ubiquinone reductase (non-electrogenic) activity"/>
    <property type="evidence" value="ECO:0007669"/>
    <property type="project" value="UniProtKB-UniRule"/>
</dbReference>
<dbReference type="GO" id="GO:0048038">
    <property type="term" value="F:quinone binding"/>
    <property type="evidence" value="ECO:0007669"/>
    <property type="project" value="UniProtKB-KW"/>
</dbReference>
<dbReference type="Gene3D" id="1.10.645.10">
    <property type="entry name" value="Cytochrome-c3 Hydrogenase, chain B"/>
    <property type="match status" value="1"/>
</dbReference>
<dbReference type="Gene3D" id="3.30.460.80">
    <property type="entry name" value="NADH:ubiquinone oxidoreductase, 30kDa subunit"/>
    <property type="match status" value="1"/>
</dbReference>
<dbReference type="HAMAP" id="MF_01397">
    <property type="entry name" value="NDH1_NuoCD_2"/>
    <property type="match status" value="1"/>
</dbReference>
<dbReference type="HAMAP" id="MF_01358">
    <property type="entry name" value="NDH1_NuoD"/>
    <property type="match status" value="1"/>
</dbReference>
<dbReference type="InterPro" id="IPR001135">
    <property type="entry name" value="NADH_Q_OxRdtase_suD"/>
</dbReference>
<dbReference type="InterPro" id="IPR037232">
    <property type="entry name" value="NADH_quin_OxRdtase_su_C/D-like"/>
</dbReference>
<dbReference type="InterPro" id="IPR001268">
    <property type="entry name" value="NADH_UbQ_OxRdtase_30kDa_su"/>
</dbReference>
<dbReference type="InterPro" id="IPR026662">
    <property type="entry name" value="NDH-1_subunit_CD"/>
</dbReference>
<dbReference type="InterPro" id="IPR022885">
    <property type="entry name" value="NDH1_su_D/H"/>
</dbReference>
<dbReference type="InterPro" id="IPR029014">
    <property type="entry name" value="NiFe-Hase_large"/>
</dbReference>
<dbReference type="NCBIfam" id="NF004739">
    <property type="entry name" value="PRK06075.1"/>
    <property type="match status" value="1"/>
</dbReference>
<dbReference type="PANTHER" id="PTHR11993:SF10">
    <property type="entry name" value="NADH DEHYDROGENASE [UBIQUINONE] IRON-SULFUR PROTEIN 2, MITOCHONDRIAL"/>
    <property type="match status" value="1"/>
</dbReference>
<dbReference type="PANTHER" id="PTHR11993">
    <property type="entry name" value="NADH-UBIQUINONE OXIDOREDUCTASE 49 KDA SUBUNIT"/>
    <property type="match status" value="1"/>
</dbReference>
<dbReference type="Pfam" id="PF00329">
    <property type="entry name" value="Complex1_30kDa"/>
    <property type="match status" value="1"/>
</dbReference>
<dbReference type="Pfam" id="PF00346">
    <property type="entry name" value="Complex1_49kDa"/>
    <property type="match status" value="1"/>
</dbReference>
<dbReference type="SUPFAM" id="SSF56762">
    <property type="entry name" value="HydB/Nqo4-like"/>
    <property type="match status" value="1"/>
</dbReference>
<dbReference type="SUPFAM" id="SSF143243">
    <property type="entry name" value="Nqo5-like"/>
    <property type="match status" value="1"/>
</dbReference>
<keyword id="KW-0997">Cell inner membrane</keyword>
<keyword id="KW-1003">Cell membrane</keyword>
<keyword id="KW-0472">Membrane</keyword>
<keyword id="KW-0511">Multifunctional enzyme</keyword>
<keyword id="KW-0520">NAD</keyword>
<keyword id="KW-0874">Quinone</keyword>
<keyword id="KW-1278">Translocase</keyword>
<keyword id="KW-0813">Transport</keyword>
<keyword id="KW-0830">Ubiquinone</keyword>
<feature type="chain" id="PRO_0000358702" description="NADH-quinone oxidoreductase subunit C/D">
    <location>
        <begin position="1"/>
        <end position="576"/>
    </location>
</feature>
<feature type="region of interest" description="NADH dehydrogenase I subunit C" evidence="2">
    <location>
        <begin position="1"/>
        <end position="176"/>
    </location>
</feature>
<feature type="region of interest" description="NADH dehydrogenase I subunit D" evidence="2">
    <location>
        <begin position="200"/>
        <end position="576"/>
    </location>
</feature>
<evidence type="ECO:0000250" key="1"/>
<evidence type="ECO:0000255" key="2">
    <source>
        <dbReference type="HAMAP-Rule" id="MF_01397"/>
    </source>
</evidence>
<comment type="function">
    <text evidence="2">NDH-1 shuttles electrons from NADH, via FMN and iron-sulfur (Fe-S) centers, to quinones in the respiratory chain. The immediate electron acceptor for the enzyme in this species is believed to be ubiquinone. Couples the redox reaction to proton translocation (for every two electrons transferred, four hydrogen ions are translocated across the cytoplasmic membrane), and thus conserves the redox energy in a proton gradient.</text>
</comment>
<comment type="catalytic activity">
    <reaction evidence="2">
        <text>a quinone + NADH + 5 H(+)(in) = a quinol + NAD(+) + 4 H(+)(out)</text>
        <dbReference type="Rhea" id="RHEA:57888"/>
        <dbReference type="ChEBI" id="CHEBI:15378"/>
        <dbReference type="ChEBI" id="CHEBI:24646"/>
        <dbReference type="ChEBI" id="CHEBI:57540"/>
        <dbReference type="ChEBI" id="CHEBI:57945"/>
        <dbReference type="ChEBI" id="CHEBI:132124"/>
    </reaction>
</comment>
<comment type="subunit">
    <text evidence="2">NDH-1 is composed of 13 different subunits. Subunits NuoB, CD, E, F, and G constitute the peripheral sector of the complex.</text>
</comment>
<comment type="subcellular location">
    <subcellularLocation>
        <location evidence="2">Cell inner membrane</location>
        <topology evidence="2">Peripheral membrane protein</topology>
        <orientation evidence="1">Cytoplasmic side</orientation>
    </subcellularLocation>
</comment>
<comment type="similarity">
    <text evidence="2">In the N-terminal section; belongs to the complex I 30 kDa subunit family.</text>
</comment>
<comment type="similarity">
    <text evidence="2">In the C-terminal section; belongs to the complex I 49 kDa subunit family.</text>
</comment>
<protein>
    <recommendedName>
        <fullName evidence="2">NADH-quinone oxidoreductase subunit C/D</fullName>
        <ecNumber evidence="2">7.1.1.-</ecNumber>
    </recommendedName>
    <alternativeName>
        <fullName evidence="2">NADH dehydrogenase I subunit C/D</fullName>
    </alternativeName>
    <alternativeName>
        <fullName evidence="2">NDH-1 subunit C/D</fullName>
    </alternativeName>
</protein>
<sequence length="576" mass="66728">MAWISLEKAKKLEERFGYPKVSEGKGVLSVEVPKDKFIEFLTFLKEDPEYQFKMFIDLTIIDHGEKENPRFQGVVILFSPKNQERIIVKTWAENETLPTLTNLWKGAKWAEREAWDMFGIKFEGHENLVRMLLWETYPYHPLRKDFPLEGIKDTELPSLNETLRGENLEGLFNYDRMHTALPTMEDLEITQKKRMPVKTSQIVLNWGPLHPGTHGTIWFLFDLDGEYVKQCDIIIGQLHRGVEKLGENVNWQQFIPYTDRMDYIAAINENHAYVLAAEKMLGIEVPEKAKWIRTMMAELSRINSHLLWLGTYALDLGALTMFLYTFREREKIMDIIEGITGARFTINYFRIGGVFADLPYGALDAIEHLIKDLPQRINDYETLLTRNRVWLSRNKDVCVITEEDVYQYGLTGAVARGSGVPYDVRKIDKYDAYGEVEFDIPVGEKGDSYDRYLVRMEEMRQSIRIIEQCIAKLRKMSKDDPYFFQTPDEKKLKVTIDGRGMKLPAGETYASSDNPRGELGFYIYNKKDGLKAHRMRIRSGAFYNLQVFTKAIIGRPIADAITLLSTIDPVVGETDR</sequence>